<gene>
    <name evidence="1" type="primary">fsa</name>
    <name type="ordered locus">SARI_03548</name>
</gene>
<evidence type="ECO:0000255" key="1">
    <source>
        <dbReference type="HAMAP-Rule" id="MF_00496"/>
    </source>
</evidence>
<protein>
    <recommendedName>
        <fullName evidence="1">Fructose-6-phosphate aldolase</fullName>
        <ecNumber evidence="1">4.1.2.-</ecNumber>
    </recommendedName>
</protein>
<reference key="1">
    <citation type="submission" date="2007-11" db="EMBL/GenBank/DDBJ databases">
        <authorList>
            <consortium name="The Salmonella enterica serovar Arizonae Genome Sequencing Project"/>
            <person name="McClelland M."/>
            <person name="Sanderson E.K."/>
            <person name="Porwollik S."/>
            <person name="Spieth J."/>
            <person name="Clifton W.S."/>
            <person name="Fulton R."/>
            <person name="Chunyan W."/>
            <person name="Wollam A."/>
            <person name="Shah N."/>
            <person name="Pepin K."/>
            <person name="Bhonagiri V."/>
            <person name="Nash W."/>
            <person name="Johnson M."/>
            <person name="Thiruvilangam P."/>
            <person name="Wilson R."/>
        </authorList>
    </citation>
    <scope>NUCLEOTIDE SEQUENCE [LARGE SCALE GENOMIC DNA]</scope>
    <source>
        <strain>ATCC BAA-731 / CDC346-86 / RSK2980</strain>
    </source>
</reference>
<proteinExistence type="inferred from homology"/>
<organism>
    <name type="scientific">Salmonella arizonae (strain ATCC BAA-731 / CDC346-86 / RSK2980)</name>
    <dbReference type="NCBI Taxonomy" id="41514"/>
    <lineage>
        <taxon>Bacteria</taxon>
        <taxon>Pseudomonadati</taxon>
        <taxon>Pseudomonadota</taxon>
        <taxon>Gammaproteobacteria</taxon>
        <taxon>Enterobacterales</taxon>
        <taxon>Enterobacteriaceae</taxon>
        <taxon>Salmonella</taxon>
    </lineage>
</organism>
<dbReference type="EC" id="4.1.2.-" evidence="1"/>
<dbReference type="EMBL" id="CP000880">
    <property type="protein sequence ID" value="ABX23363.1"/>
    <property type="molecule type" value="Genomic_DNA"/>
</dbReference>
<dbReference type="SMR" id="A9MI17"/>
<dbReference type="STRING" id="41514.SARI_03548"/>
<dbReference type="KEGG" id="ses:SARI_03548"/>
<dbReference type="HOGENOM" id="CLU_079764_2_0_6"/>
<dbReference type="Proteomes" id="UP000002084">
    <property type="component" value="Chromosome"/>
</dbReference>
<dbReference type="GO" id="GO:0005737">
    <property type="term" value="C:cytoplasm"/>
    <property type="evidence" value="ECO:0007669"/>
    <property type="project" value="UniProtKB-SubCell"/>
</dbReference>
<dbReference type="GO" id="GO:0097023">
    <property type="term" value="F:fructose 6-phosphate aldolase activity"/>
    <property type="evidence" value="ECO:0007669"/>
    <property type="project" value="RHEA"/>
</dbReference>
<dbReference type="GO" id="GO:0006000">
    <property type="term" value="P:fructose metabolic process"/>
    <property type="evidence" value="ECO:0007669"/>
    <property type="project" value="UniProtKB-UniRule"/>
</dbReference>
<dbReference type="CDD" id="cd00956">
    <property type="entry name" value="Transaldolase_FSA"/>
    <property type="match status" value="1"/>
</dbReference>
<dbReference type="FunFam" id="3.20.20.70:FF:000018">
    <property type="entry name" value="Probable transaldolase"/>
    <property type="match status" value="1"/>
</dbReference>
<dbReference type="Gene3D" id="3.20.20.70">
    <property type="entry name" value="Aldolase class I"/>
    <property type="match status" value="1"/>
</dbReference>
<dbReference type="HAMAP" id="MF_00496">
    <property type="entry name" value="F6P_aldolase"/>
    <property type="match status" value="1"/>
</dbReference>
<dbReference type="InterPro" id="IPR013785">
    <property type="entry name" value="Aldolase_TIM"/>
</dbReference>
<dbReference type="InterPro" id="IPR023001">
    <property type="entry name" value="F6P_aldolase"/>
</dbReference>
<dbReference type="InterPro" id="IPR001585">
    <property type="entry name" value="TAL/FSA"/>
</dbReference>
<dbReference type="InterPro" id="IPR004731">
    <property type="entry name" value="Transaldolase_3B/F6P_aldolase"/>
</dbReference>
<dbReference type="InterPro" id="IPR018225">
    <property type="entry name" value="Transaldolase_AS"/>
</dbReference>
<dbReference type="InterPro" id="IPR033919">
    <property type="entry name" value="TSA/FSA_arc/bac"/>
</dbReference>
<dbReference type="NCBIfam" id="TIGR00875">
    <property type="entry name" value="fsa_talC_mipB"/>
    <property type="match status" value="1"/>
</dbReference>
<dbReference type="NCBIfam" id="NF009296">
    <property type="entry name" value="PRK12653.1"/>
    <property type="match status" value="1"/>
</dbReference>
<dbReference type="PANTHER" id="PTHR10683:SF40">
    <property type="entry name" value="FRUCTOSE-6-PHOSPHATE ALDOLASE 1-RELATED"/>
    <property type="match status" value="1"/>
</dbReference>
<dbReference type="PANTHER" id="PTHR10683">
    <property type="entry name" value="TRANSALDOLASE"/>
    <property type="match status" value="1"/>
</dbReference>
<dbReference type="Pfam" id="PF00923">
    <property type="entry name" value="TAL_FSA"/>
    <property type="match status" value="1"/>
</dbReference>
<dbReference type="SUPFAM" id="SSF51569">
    <property type="entry name" value="Aldolase"/>
    <property type="match status" value="1"/>
</dbReference>
<dbReference type="PROSITE" id="PS01054">
    <property type="entry name" value="TRANSALDOLASE_1"/>
    <property type="match status" value="1"/>
</dbReference>
<dbReference type="PROSITE" id="PS00958">
    <property type="entry name" value="TRANSALDOLASE_2"/>
    <property type="match status" value="1"/>
</dbReference>
<name>FSA_SALAR</name>
<keyword id="KW-0119">Carbohydrate metabolism</keyword>
<keyword id="KW-0963">Cytoplasm</keyword>
<keyword id="KW-0456">Lyase</keyword>
<keyword id="KW-1185">Reference proteome</keyword>
<keyword id="KW-0704">Schiff base</keyword>
<sequence length="220" mass="23559">MELYLDTANVAEVERLARIFPIAGVTTNPSIVAASKESIWDVLPRLQNAIGEEGTLFAQTMSRDAKGMVEEAKRLNNAIPGIVVKIPVTAEGLAAIKQLKKEGIVTLGTAVYSASQGLLAALAGAKYVAPYVNRVDAQGGDGIRMVQELQTLLERHAPDSMVLAASFKTPRQALDCLLAGCQAITLPLDVAQQMLNTPAVESAIEKFEQDWKNAFGNLNL</sequence>
<feature type="chain" id="PRO_1000081410" description="Fructose-6-phosphate aldolase">
    <location>
        <begin position="1"/>
        <end position="220"/>
    </location>
</feature>
<feature type="active site" description="Schiff-base intermediate with substrate" evidence="1">
    <location>
        <position position="85"/>
    </location>
</feature>
<comment type="function">
    <text evidence="1">Catalyzes the reversible formation of fructose 6-phosphate from dihydroxyacetone and D-glyceraldehyde 3-phosphate via an aldolization reaction.</text>
</comment>
<comment type="catalytic activity">
    <reaction evidence="1">
        <text>beta-D-fructose 6-phosphate = dihydroxyacetone + D-glyceraldehyde 3-phosphate</text>
        <dbReference type="Rhea" id="RHEA:28002"/>
        <dbReference type="ChEBI" id="CHEBI:16016"/>
        <dbReference type="ChEBI" id="CHEBI:57634"/>
        <dbReference type="ChEBI" id="CHEBI:59776"/>
    </reaction>
</comment>
<comment type="subunit">
    <text evidence="1">Homodecamer.</text>
</comment>
<comment type="subcellular location">
    <subcellularLocation>
        <location evidence="1">Cytoplasm</location>
    </subcellularLocation>
</comment>
<comment type="similarity">
    <text evidence="1">Belongs to the transaldolase family. Type 3A subfamily.</text>
</comment>
<accession>A9MI17</accession>